<organism>
    <name type="scientific">Xanthomonas oryzae pv. oryzae (strain KACC10331 / KXO85)</name>
    <dbReference type="NCBI Taxonomy" id="291331"/>
    <lineage>
        <taxon>Bacteria</taxon>
        <taxon>Pseudomonadati</taxon>
        <taxon>Pseudomonadota</taxon>
        <taxon>Gammaproteobacteria</taxon>
        <taxon>Lysobacterales</taxon>
        <taxon>Lysobacteraceae</taxon>
        <taxon>Xanthomonas</taxon>
    </lineage>
</organism>
<protein>
    <recommendedName>
        <fullName evidence="1">Small ribosomal subunit protein uS15</fullName>
    </recommendedName>
    <alternativeName>
        <fullName evidence="3">30S ribosomal protein S15</fullName>
    </alternativeName>
</protein>
<keyword id="KW-1185">Reference proteome</keyword>
<keyword id="KW-0687">Ribonucleoprotein</keyword>
<keyword id="KW-0689">Ribosomal protein</keyword>
<keyword id="KW-0694">RNA-binding</keyword>
<keyword id="KW-0699">rRNA-binding</keyword>
<gene>
    <name evidence="1" type="primary">rpsO</name>
    <name type="ordered locus">XOO3215</name>
</gene>
<dbReference type="EMBL" id="AE013598">
    <property type="protein sequence ID" value="AAW76469.1"/>
    <property type="status" value="ALT_INIT"/>
    <property type="molecule type" value="Genomic_DNA"/>
</dbReference>
<dbReference type="SMR" id="Q5GXV2"/>
<dbReference type="STRING" id="291331.XOO3215"/>
<dbReference type="KEGG" id="xoo:XOO3215"/>
<dbReference type="HOGENOM" id="CLU_148518_0_0_6"/>
<dbReference type="Proteomes" id="UP000006735">
    <property type="component" value="Chromosome"/>
</dbReference>
<dbReference type="GO" id="GO:0022627">
    <property type="term" value="C:cytosolic small ribosomal subunit"/>
    <property type="evidence" value="ECO:0007669"/>
    <property type="project" value="TreeGrafter"/>
</dbReference>
<dbReference type="GO" id="GO:0019843">
    <property type="term" value="F:rRNA binding"/>
    <property type="evidence" value="ECO:0007669"/>
    <property type="project" value="UniProtKB-UniRule"/>
</dbReference>
<dbReference type="GO" id="GO:0003735">
    <property type="term" value="F:structural constituent of ribosome"/>
    <property type="evidence" value="ECO:0007669"/>
    <property type="project" value="InterPro"/>
</dbReference>
<dbReference type="GO" id="GO:0006412">
    <property type="term" value="P:translation"/>
    <property type="evidence" value="ECO:0007669"/>
    <property type="project" value="UniProtKB-UniRule"/>
</dbReference>
<dbReference type="CDD" id="cd00353">
    <property type="entry name" value="Ribosomal_S15p_S13e"/>
    <property type="match status" value="1"/>
</dbReference>
<dbReference type="FunFam" id="1.10.287.10:FF:000002">
    <property type="entry name" value="30S ribosomal protein S15"/>
    <property type="match status" value="1"/>
</dbReference>
<dbReference type="Gene3D" id="6.10.250.3130">
    <property type="match status" value="1"/>
</dbReference>
<dbReference type="Gene3D" id="1.10.287.10">
    <property type="entry name" value="S15/NS1, RNA-binding"/>
    <property type="match status" value="1"/>
</dbReference>
<dbReference type="HAMAP" id="MF_01343_B">
    <property type="entry name" value="Ribosomal_uS15_B"/>
    <property type="match status" value="1"/>
</dbReference>
<dbReference type="InterPro" id="IPR000589">
    <property type="entry name" value="Ribosomal_uS15"/>
</dbReference>
<dbReference type="InterPro" id="IPR005290">
    <property type="entry name" value="Ribosomal_uS15_bac-type"/>
</dbReference>
<dbReference type="InterPro" id="IPR009068">
    <property type="entry name" value="uS15_NS1_RNA-bd_sf"/>
</dbReference>
<dbReference type="NCBIfam" id="TIGR00952">
    <property type="entry name" value="S15_bact"/>
    <property type="match status" value="1"/>
</dbReference>
<dbReference type="PANTHER" id="PTHR23321">
    <property type="entry name" value="RIBOSOMAL PROTEIN S15, BACTERIAL AND ORGANELLAR"/>
    <property type="match status" value="1"/>
</dbReference>
<dbReference type="PANTHER" id="PTHR23321:SF26">
    <property type="entry name" value="SMALL RIBOSOMAL SUBUNIT PROTEIN US15M"/>
    <property type="match status" value="1"/>
</dbReference>
<dbReference type="Pfam" id="PF00312">
    <property type="entry name" value="Ribosomal_S15"/>
    <property type="match status" value="1"/>
</dbReference>
<dbReference type="SMART" id="SM01387">
    <property type="entry name" value="Ribosomal_S15"/>
    <property type="match status" value="1"/>
</dbReference>
<dbReference type="SUPFAM" id="SSF47060">
    <property type="entry name" value="S15/NS1 RNA-binding domain"/>
    <property type="match status" value="1"/>
</dbReference>
<dbReference type="PROSITE" id="PS00362">
    <property type="entry name" value="RIBOSOMAL_S15"/>
    <property type="match status" value="1"/>
</dbReference>
<reference key="1">
    <citation type="journal article" date="2005" name="Nucleic Acids Res.">
        <title>The genome sequence of Xanthomonas oryzae pathovar oryzae KACC10331, the bacterial blight pathogen of rice.</title>
        <authorList>
            <person name="Lee B.-M."/>
            <person name="Park Y.-J."/>
            <person name="Park D.-S."/>
            <person name="Kang H.-W."/>
            <person name="Kim J.-G."/>
            <person name="Song E.-S."/>
            <person name="Park I.-C."/>
            <person name="Yoon U.-H."/>
            <person name="Hahn J.-H."/>
            <person name="Koo B.-S."/>
            <person name="Lee G.-B."/>
            <person name="Kim H."/>
            <person name="Park H.-S."/>
            <person name="Yoon K.-O."/>
            <person name="Kim J.-H."/>
            <person name="Jung C.-H."/>
            <person name="Koh N.-H."/>
            <person name="Seo J.-S."/>
            <person name="Go S.-J."/>
        </authorList>
    </citation>
    <scope>NUCLEOTIDE SEQUENCE [LARGE SCALE GENOMIC DNA]</scope>
    <source>
        <strain>KACC10331 / KXO85</strain>
    </source>
</reference>
<feature type="chain" id="PRO_0000115594" description="Small ribosomal subunit protein uS15">
    <location>
        <begin position="1"/>
        <end position="86"/>
    </location>
</feature>
<feature type="region of interest" description="Disordered" evidence="2">
    <location>
        <begin position="1"/>
        <end position="22"/>
    </location>
</feature>
<feature type="compositionally biased region" description="Basic and acidic residues" evidence="2">
    <location>
        <begin position="7"/>
        <end position="16"/>
    </location>
</feature>
<accession>Q5GXV2</accession>
<proteinExistence type="inferred from homology"/>
<comment type="function">
    <text evidence="1">One of the primary rRNA binding proteins, it binds directly to 16S rRNA where it helps nucleate assembly of the platform of the 30S subunit by binding and bridging several RNA helices of the 16S rRNA.</text>
</comment>
<comment type="function">
    <text evidence="1">Forms an intersubunit bridge (bridge B4) with the 23S rRNA of the 50S subunit in the ribosome.</text>
</comment>
<comment type="subunit">
    <text evidence="1">Part of the 30S ribosomal subunit. Forms a bridge to the 50S subunit in the 70S ribosome, contacting the 23S rRNA.</text>
</comment>
<comment type="similarity">
    <text evidence="1">Belongs to the universal ribosomal protein uS15 family.</text>
</comment>
<comment type="sequence caution" evidence="3">
    <conflict type="erroneous initiation">
        <sequence resource="EMBL-CDS" id="AAW76469"/>
    </conflict>
</comment>
<name>RS15_XANOR</name>
<evidence type="ECO:0000255" key="1">
    <source>
        <dbReference type="HAMAP-Rule" id="MF_01343"/>
    </source>
</evidence>
<evidence type="ECO:0000256" key="2">
    <source>
        <dbReference type="SAM" id="MobiDB-lite"/>
    </source>
</evidence>
<evidence type="ECO:0000305" key="3"/>
<sequence>MSVDTQKVIEDNKRSAQDTGSPEVQVALLTARIELLTGHFKTHKKDHHSRRGLLQMVNRRRSLLDYLKKKDNERYKSLIEKLGLRR</sequence>